<comment type="function">
    <text evidence="1">Zinc phosphodiesterase, which displays some tRNA 3'-processing endonuclease activity. Probably involved in tRNA maturation, by removing a 3'-trailer from precursor tRNA.</text>
</comment>
<comment type="catalytic activity">
    <reaction evidence="1">
        <text>Endonucleolytic cleavage of RNA, removing extra 3' nucleotides from tRNA precursor, generating 3' termini of tRNAs. A 3'-hydroxy group is left at the tRNA terminus and a 5'-phosphoryl group is left at the trailer molecule.</text>
        <dbReference type="EC" id="3.1.26.11"/>
    </reaction>
</comment>
<comment type="cofactor">
    <cofactor evidence="1">
        <name>Zn(2+)</name>
        <dbReference type="ChEBI" id="CHEBI:29105"/>
    </cofactor>
    <text evidence="1">Binds 2 Zn(2+) ions.</text>
</comment>
<comment type="subunit">
    <text evidence="1">Homodimer.</text>
</comment>
<comment type="similarity">
    <text evidence="1">Belongs to the RNase Z family.</text>
</comment>
<name>RNZ_CLOBA</name>
<gene>
    <name evidence="1" type="primary">rnz</name>
    <name type="ordered locus">CLH_0996</name>
</gene>
<accession>B2V377</accession>
<evidence type="ECO:0000255" key="1">
    <source>
        <dbReference type="HAMAP-Rule" id="MF_01818"/>
    </source>
</evidence>
<reference key="1">
    <citation type="submission" date="2008-05" db="EMBL/GenBank/DDBJ databases">
        <title>Complete genome sequence of Clostridium botulinum E3 str. Alaska E43.</title>
        <authorList>
            <person name="Brinkac L.M."/>
            <person name="Brown J.L."/>
            <person name="Bruce D."/>
            <person name="Detter C."/>
            <person name="Munk C."/>
            <person name="Smith L.A."/>
            <person name="Smith T.J."/>
            <person name="Sutton G."/>
            <person name="Brettin T.S."/>
        </authorList>
    </citation>
    <scope>NUCLEOTIDE SEQUENCE [LARGE SCALE GENOMIC DNA]</scope>
    <source>
        <strain>Alaska E43 / Type E3</strain>
    </source>
</reference>
<dbReference type="EC" id="3.1.26.11" evidence="1"/>
<dbReference type="EMBL" id="CP001078">
    <property type="protein sequence ID" value="ACD51027.1"/>
    <property type="molecule type" value="Genomic_DNA"/>
</dbReference>
<dbReference type="RefSeq" id="WP_012449477.1">
    <property type="nucleotide sequence ID" value="NC_010723.1"/>
</dbReference>
<dbReference type="SMR" id="B2V377"/>
<dbReference type="KEGG" id="cbt:CLH_0996"/>
<dbReference type="HOGENOM" id="CLU_031317_2_1_9"/>
<dbReference type="GO" id="GO:0042781">
    <property type="term" value="F:3'-tRNA processing endoribonuclease activity"/>
    <property type="evidence" value="ECO:0007669"/>
    <property type="project" value="UniProtKB-UniRule"/>
</dbReference>
<dbReference type="GO" id="GO:0008270">
    <property type="term" value="F:zinc ion binding"/>
    <property type="evidence" value="ECO:0007669"/>
    <property type="project" value="UniProtKB-UniRule"/>
</dbReference>
<dbReference type="CDD" id="cd07717">
    <property type="entry name" value="RNaseZ_ZiPD-like_MBL-fold"/>
    <property type="match status" value="1"/>
</dbReference>
<dbReference type="Gene3D" id="3.60.15.10">
    <property type="entry name" value="Ribonuclease Z/Hydroxyacylglutathione hydrolase-like"/>
    <property type="match status" value="1"/>
</dbReference>
<dbReference type="HAMAP" id="MF_01818">
    <property type="entry name" value="RNase_Z_BN"/>
    <property type="match status" value="1"/>
</dbReference>
<dbReference type="InterPro" id="IPR001279">
    <property type="entry name" value="Metallo-B-lactamas"/>
</dbReference>
<dbReference type="InterPro" id="IPR036866">
    <property type="entry name" value="RibonucZ/Hydroxyglut_hydro"/>
</dbReference>
<dbReference type="InterPro" id="IPR013471">
    <property type="entry name" value="RNase_Z/BN"/>
</dbReference>
<dbReference type="NCBIfam" id="NF000801">
    <property type="entry name" value="PRK00055.1-3"/>
    <property type="match status" value="1"/>
</dbReference>
<dbReference type="NCBIfam" id="TIGR02651">
    <property type="entry name" value="RNase_Z"/>
    <property type="match status" value="1"/>
</dbReference>
<dbReference type="PANTHER" id="PTHR46018">
    <property type="entry name" value="ZINC PHOSPHODIESTERASE ELAC PROTEIN 1"/>
    <property type="match status" value="1"/>
</dbReference>
<dbReference type="PANTHER" id="PTHR46018:SF2">
    <property type="entry name" value="ZINC PHOSPHODIESTERASE ELAC PROTEIN 1"/>
    <property type="match status" value="1"/>
</dbReference>
<dbReference type="Pfam" id="PF00753">
    <property type="entry name" value="Lactamase_B"/>
    <property type="match status" value="1"/>
</dbReference>
<dbReference type="SUPFAM" id="SSF56281">
    <property type="entry name" value="Metallo-hydrolase/oxidoreductase"/>
    <property type="match status" value="1"/>
</dbReference>
<sequence length="315" mass="35335">MIDLCILGTTGGMPMVNKYLSATLININGRKILIDCGEGTQVAMREIGWGFKSIDLICITHSHGDHTIGLPGLLSTMGNSGRTEKVIIVGPKGIKEIVNGLNIINPYLPYELEVVELENNDLKFIIDKNNMFLCEDNDKCNLILSSLEVEHSAKCLSYSFYIKRRPRFSVEKASKNNVPKLLWSKLQNQEIVNYDNKIYTPDLVLDNARKGIKISYVTDTRPISTLPQFIKYSDLFICEGTYGSDEDIDKAIKNKHMTFRESATLAKKGECNELILTHFSAALSAPENFLNNAKEIFHNSIVAHDGLIKTLKFID</sequence>
<feature type="chain" id="PRO_1000187945" description="Ribonuclease Z">
    <location>
        <begin position="1"/>
        <end position="315"/>
    </location>
</feature>
<feature type="active site" description="Proton acceptor" evidence="1">
    <location>
        <position position="65"/>
    </location>
</feature>
<feature type="binding site" evidence="1">
    <location>
        <position position="61"/>
    </location>
    <ligand>
        <name>Zn(2+)</name>
        <dbReference type="ChEBI" id="CHEBI:29105"/>
        <label>1</label>
        <note>catalytic</note>
    </ligand>
</feature>
<feature type="binding site" evidence="1">
    <location>
        <position position="63"/>
    </location>
    <ligand>
        <name>Zn(2+)</name>
        <dbReference type="ChEBI" id="CHEBI:29105"/>
        <label>1</label>
        <note>catalytic</note>
    </ligand>
</feature>
<feature type="binding site" evidence="1">
    <location>
        <position position="65"/>
    </location>
    <ligand>
        <name>Zn(2+)</name>
        <dbReference type="ChEBI" id="CHEBI:29105"/>
        <label>2</label>
        <note>catalytic</note>
    </ligand>
</feature>
<feature type="binding site" evidence="1">
    <location>
        <position position="66"/>
    </location>
    <ligand>
        <name>Zn(2+)</name>
        <dbReference type="ChEBI" id="CHEBI:29105"/>
        <label>2</label>
        <note>catalytic</note>
    </ligand>
</feature>
<feature type="binding site" evidence="1">
    <location>
        <position position="151"/>
    </location>
    <ligand>
        <name>Zn(2+)</name>
        <dbReference type="ChEBI" id="CHEBI:29105"/>
        <label>1</label>
        <note>catalytic</note>
    </ligand>
</feature>
<feature type="binding site" evidence="1">
    <location>
        <position position="219"/>
    </location>
    <ligand>
        <name>Zn(2+)</name>
        <dbReference type="ChEBI" id="CHEBI:29105"/>
        <label>1</label>
        <note>catalytic</note>
    </ligand>
</feature>
<feature type="binding site" evidence="1">
    <location>
        <position position="219"/>
    </location>
    <ligand>
        <name>Zn(2+)</name>
        <dbReference type="ChEBI" id="CHEBI:29105"/>
        <label>2</label>
        <note>catalytic</note>
    </ligand>
</feature>
<feature type="binding site" evidence="1">
    <location>
        <position position="278"/>
    </location>
    <ligand>
        <name>Zn(2+)</name>
        <dbReference type="ChEBI" id="CHEBI:29105"/>
        <label>2</label>
        <note>catalytic</note>
    </ligand>
</feature>
<protein>
    <recommendedName>
        <fullName evidence="1">Ribonuclease Z</fullName>
        <shortName evidence="1">RNase Z</shortName>
        <ecNumber evidence="1">3.1.26.11</ecNumber>
    </recommendedName>
    <alternativeName>
        <fullName evidence="1">tRNA 3 endonuclease</fullName>
    </alternativeName>
    <alternativeName>
        <fullName evidence="1">tRNase Z</fullName>
    </alternativeName>
</protein>
<organism>
    <name type="scientific">Clostridium botulinum (strain Alaska E43 / Type E3)</name>
    <dbReference type="NCBI Taxonomy" id="508767"/>
    <lineage>
        <taxon>Bacteria</taxon>
        <taxon>Bacillati</taxon>
        <taxon>Bacillota</taxon>
        <taxon>Clostridia</taxon>
        <taxon>Eubacteriales</taxon>
        <taxon>Clostridiaceae</taxon>
        <taxon>Clostridium</taxon>
    </lineage>
</organism>
<proteinExistence type="inferred from homology"/>
<keyword id="KW-0255">Endonuclease</keyword>
<keyword id="KW-0378">Hydrolase</keyword>
<keyword id="KW-0479">Metal-binding</keyword>
<keyword id="KW-0540">Nuclease</keyword>
<keyword id="KW-0819">tRNA processing</keyword>
<keyword id="KW-0862">Zinc</keyword>